<dbReference type="EMBL" id="L77119">
    <property type="protein sequence ID" value="AAC37070.1"/>
    <property type="molecule type" value="Genomic_DNA"/>
</dbReference>
<dbReference type="PIR" id="D64517">
    <property type="entry name" value="D64517"/>
</dbReference>
<dbReference type="PaxDb" id="243232-MJ_ECS12"/>
<dbReference type="EnsemblBacteria" id="AAC37070">
    <property type="protein sequence ID" value="AAC37070"/>
    <property type="gene ID" value="MJ_ECS12"/>
</dbReference>
<dbReference type="KEGG" id="mja:MJ_ECS12"/>
<dbReference type="eggNOG" id="arCOG02164">
    <property type="taxonomic scope" value="Archaea"/>
</dbReference>
<dbReference type="HOGENOM" id="CLU_2748197_0_0_2"/>
<dbReference type="InParanoid" id="Q60311"/>
<dbReference type="Proteomes" id="UP000000805">
    <property type="component" value="Plasmid pDSM2661_2"/>
</dbReference>
<feature type="chain" id="PRO_0000107492" description="Uncharacterized protein MJECS12">
    <location>
        <begin position="1"/>
        <end position="70"/>
    </location>
</feature>
<organism>
    <name type="scientific">Methanocaldococcus jannaschii (strain ATCC 43067 / DSM 2661 / JAL-1 / JCM 10045 / NBRC 100440)</name>
    <name type="common">Methanococcus jannaschii</name>
    <dbReference type="NCBI Taxonomy" id="243232"/>
    <lineage>
        <taxon>Archaea</taxon>
        <taxon>Methanobacteriati</taxon>
        <taxon>Methanobacteriota</taxon>
        <taxon>Methanomada group</taxon>
        <taxon>Methanococci</taxon>
        <taxon>Methanococcales</taxon>
        <taxon>Methanocaldococcaceae</taxon>
        <taxon>Methanocaldococcus</taxon>
    </lineage>
</organism>
<geneLocation type="plasmid">
    <name>small ECE</name>
</geneLocation>
<name>Y3412_METJA</name>
<sequence>MKSKKPNFEFELKNYAIWYDINDAIIKESLCRYIKNILRKEFCGNCSKIKDIELKQKGKDIVVHLQFKLG</sequence>
<reference key="1">
    <citation type="journal article" date="1996" name="Science">
        <title>Complete genome sequence of the methanogenic archaeon, Methanococcus jannaschii.</title>
        <authorList>
            <person name="Bult C.J."/>
            <person name="White O."/>
            <person name="Olsen G.J."/>
            <person name="Zhou L."/>
            <person name="Fleischmann R.D."/>
            <person name="Sutton G.G."/>
            <person name="Blake J.A."/>
            <person name="FitzGerald L.M."/>
            <person name="Clayton R.A."/>
            <person name="Gocayne J.D."/>
            <person name="Kerlavage A.R."/>
            <person name="Dougherty B.A."/>
            <person name="Tomb J.-F."/>
            <person name="Adams M.D."/>
            <person name="Reich C.I."/>
            <person name="Overbeek R."/>
            <person name="Kirkness E.F."/>
            <person name="Weinstock K.G."/>
            <person name="Merrick J.M."/>
            <person name="Glodek A."/>
            <person name="Scott J.L."/>
            <person name="Geoghagen N.S.M."/>
            <person name="Weidman J.F."/>
            <person name="Fuhrmann J.L."/>
            <person name="Nguyen D."/>
            <person name="Utterback T.R."/>
            <person name="Kelley J.M."/>
            <person name="Peterson J.D."/>
            <person name="Sadow P.W."/>
            <person name="Hanna M.C."/>
            <person name="Cotton M.D."/>
            <person name="Roberts K.M."/>
            <person name="Hurst M.A."/>
            <person name="Kaine B.P."/>
            <person name="Borodovsky M."/>
            <person name="Klenk H.-P."/>
            <person name="Fraser C.M."/>
            <person name="Smith H.O."/>
            <person name="Woese C.R."/>
            <person name="Venter J.C."/>
        </authorList>
    </citation>
    <scope>NUCLEOTIDE SEQUENCE [LARGE SCALE GENOMIC DNA]</scope>
    <source>
        <strain>ATCC 43067 / DSM 2661 / JAL-1 / JCM 10045 / NBRC 100440</strain>
    </source>
</reference>
<accession>Q60311</accession>
<keyword id="KW-0614">Plasmid</keyword>
<keyword id="KW-1185">Reference proteome</keyword>
<gene>
    <name type="ordered locus">MJECS12</name>
</gene>
<protein>
    <recommendedName>
        <fullName>Uncharacterized protein MJECS12</fullName>
    </recommendedName>
</protein>
<proteinExistence type="predicted"/>